<accession>B0M8U7</accession>
<protein>
    <recommendedName>
        <fullName evidence="4">Extended FMRFamide-9</fullName>
        <shortName evidence="4">FMRFa-9</shortName>
    </recommendedName>
</protein>
<name>FAR9_KARBO</name>
<organism>
    <name type="scientific">Karoophasma botterkloofense</name>
    <name type="common">Gladiator</name>
    <name type="synonym">Heel-walker</name>
    <dbReference type="NCBI Taxonomy" id="253132"/>
    <lineage>
        <taxon>Eukaryota</taxon>
        <taxon>Metazoa</taxon>
        <taxon>Ecdysozoa</taxon>
        <taxon>Arthropoda</taxon>
        <taxon>Hexapoda</taxon>
        <taxon>Insecta</taxon>
        <taxon>Pterygota</taxon>
        <taxon>Neoptera</taxon>
        <taxon>Polyneoptera</taxon>
        <taxon>Mantophasmatodea</taxon>
        <taxon>Austrophasmatidae</taxon>
        <taxon>Karoophasma</taxon>
    </lineage>
</organism>
<reference evidence="5" key="1">
    <citation type="journal article" date="2012" name="Syst. Biol.">
        <title>Peptidomics-based phylogeny and biogeography of Mantophasmatodea (Hexapoda).</title>
        <authorList>
            <person name="Predel R."/>
            <person name="Neupert S."/>
            <person name="Huetteroth W."/>
            <person name="Kahnt J."/>
            <person name="Waidelich D."/>
            <person name="Roth S."/>
        </authorList>
    </citation>
    <scope>PROTEIN SEQUENCE</scope>
    <scope>AMIDATION AT LEU-11</scope>
    <source>
        <tissue evidence="3">Thoracic perisympathetic organs</tissue>
    </source>
</reference>
<feature type="peptide" id="PRO_0000421542" description="Extended FMRFamide-9" evidence="3">
    <location>
        <begin position="1"/>
        <end position="11"/>
    </location>
</feature>
<feature type="modified residue" description="Leucine amide" evidence="3">
    <location>
        <position position="11"/>
    </location>
</feature>
<feature type="unsure residue" description="L or I" evidence="3">
    <location>
        <position position="11"/>
    </location>
</feature>
<keyword id="KW-0027">Amidation</keyword>
<keyword id="KW-0903">Direct protein sequencing</keyword>
<keyword id="KW-0527">Neuropeptide</keyword>
<keyword id="KW-0964">Secreted</keyword>
<comment type="function">
    <text evidence="1">FMRFamides and FMRFamide-like peptides are neuropeptides.</text>
</comment>
<comment type="subcellular location">
    <subcellularLocation>
        <location evidence="6">Secreted</location>
    </subcellularLocation>
</comment>
<comment type="similarity">
    <text evidence="2">Belongs to the FARP (FMRF amide related peptide) family.</text>
</comment>
<sequence length="11" mass="1149">GRGGASNYVRL</sequence>
<evidence type="ECO:0000250" key="1">
    <source>
        <dbReference type="UniProtKB" id="P34405"/>
    </source>
</evidence>
<evidence type="ECO:0000255" key="2"/>
<evidence type="ECO:0000269" key="3">
    <source>
    </source>
</evidence>
<evidence type="ECO:0000303" key="4">
    <source>
    </source>
</evidence>
<evidence type="ECO:0000305" key="5"/>
<evidence type="ECO:0000305" key="6">
    <source>
    </source>
</evidence>
<proteinExistence type="evidence at protein level"/>
<dbReference type="GO" id="GO:0005576">
    <property type="term" value="C:extracellular region"/>
    <property type="evidence" value="ECO:0007669"/>
    <property type="project" value="UniProtKB-SubCell"/>
</dbReference>
<dbReference type="GO" id="GO:0007218">
    <property type="term" value="P:neuropeptide signaling pathway"/>
    <property type="evidence" value="ECO:0007669"/>
    <property type="project" value="UniProtKB-KW"/>
</dbReference>